<gene>
    <name evidence="1" type="primary">nrdI</name>
    <name type="ordered locus">KPK_1122</name>
</gene>
<reference key="1">
    <citation type="journal article" date="2008" name="PLoS Genet.">
        <title>Complete genome sequence of the N2-fixing broad host range endophyte Klebsiella pneumoniae 342 and virulence predictions verified in mice.</title>
        <authorList>
            <person name="Fouts D.E."/>
            <person name="Tyler H.L."/>
            <person name="DeBoy R.T."/>
            <person name="Daugherty S."/>
            <person name="Ren Q."/>
            <person name="Badger J.H."/>
            <person name="Durkin A.S."/>
            <person name="Huot H."/>
            <person name="Shrivastava S."/>
            <person name="Kothari S."/>
            <person name="Dodson R.J."/>
            <person name="Mohamoud Y."/>
            <person name="Khouri H."/>
            <person name="Roesch L.F.W."/>
            <person name="Krogfelt K.A."/>
            <person name="Struve C."/>
            <person name="Triplett E.W."/>
            <person name="Methe B.A."/>
        </authorList>
    </citation>
    <scope>NUCLEOTIDE SEQUENCE [LARGE SCALE GENOMIC DNA]</scope>
    <source>
        <strain>342</strain>
    </source>
</reference>
<feature type="chain" id="PRO_1000095623" description="Protein NrdI">
    <location>
        <begin position="1"/>
        <end position="136"/>
    </location>
</feature>
<evidence type="ECO:0000255" key="1">
    <source>
        <dbReference type="HAMAP-Rule" id="MF_00128"/>
    </source>
</evidence>
<name>NRDI_KLEP3</name>
<protein>
    <recommendedName>
        <fullName evidence="1">Protein NrdI</fullName>
    </recommendedName>
</protein>
<organism>
    <name type="scientific">Klebsiella pneumoniae (strain 342)</name>
    <dbReference type="NCBI Taxonomy" id="507522"/>
    <lineage>
        <taxon>Bacteria</taxon>
        <taxon>Pseudomonadati</taxon>
        <taxon>Pseudomonadota</taxon>
        <taxon>Gammaproteobacteria</taxon>
        <taxon>Enterobacterales</taxon>
        <taxon>Enterobacteriaceae</taxon>
        <taxon>Klebsiella/Raoultella group</taxon>
        <taxon>Klebsiella</taxon>
        <taxon>Klebsiella pneumoniae complex</taxon>
    </lineage>
</organism>
<accession>B5XVD7</accession>
<comment type="function">
    <text evidence="1">Probably involved in ribonucleotide reductase function.</text>
</comment>
<comment type="similarity">
    <text evidence="1">Belongs to the NrdI family.</text>
</comment>
<sequence length="136" mass="15282">MSLIVYFSSRSENTHRFVQRLGLPAVRIPLNEREHLQVDEPYILIVPSYGGGGTAGAVPRQAICFLNDVHNRQLIRGVIAAGNRNFGDAWGRAGEVIAQKCAVPYLYRFELMGTPDDIDNVRKGVSEFWQRQPQNV</sequence>
<dbReference type="EMBL" id="CP000964">
    <property type="protein sequence ID" value="ACI09494.1"/>
    <property type="molecule type" value="Genomic_DNA"/>
</dbReference>
<dbReference type="SMR" id="B5XVD7"/>
<dbReference type="KEGG" id="kpe:KPK_1122"/>
<dbReference type="HOGENOM" id="CLU_114845_0_0_6"/>
<dbReference type="Proteomes" id="UP000001734">
    <property type="component" value="Chromosome"/>
</dbReference>
<dbReference type="GO" id="GO:0010181">
    <property type="term" value="F:FMN binding"/>
    <property type="evidence" value="ECO:0007669"/>
    <property type="project" value="InterPro"/>
</dbReference>
<dbReference type="GO" id="GO:0036211">
    <property type="term" value="P:protein modification process"/>
    <property type="evidence" value="ECO:0007669"/>
    <property type="project" value="InterPro"/>
</dbReference>
<dbReference type="FunFam" id="3.40.50.360:FF:000005">
    <property type="entry name" value="Protein NrdI"/>
    <property type="match status" value="1"/>
</dbReference>
<dbReference type="Gene3D" id="3.40.50.360">
    <property type="match status" value="1"/>
</dbReference>
<dbReference type="HAMAP" id="MF_00128">
    <property type="entry name" value="NrdI"/>
    <property type="match status" value="1"/>
</dbReference>
<dbReference type="InterPro" id="IPR029039">
    <property type="entry name" value="Flavoprotein-like_sf"/>
</dbReference>
<dbReference type="InterPro" id="IPR020852">
    <property type="entry name" value="RNR_Ib_NrdI_bac"/>
</dbReference>
<dbReference type="InterPro" id="IPR004465">
    <property type="entry name" value="RNR_NrdI"/>
</dbReference>
<dbReference type="NCBIfam" id="TIGR00333">
    <property type="entry name" value="nrdI"/>
    <property type="match status" value="1"/>
</dbReference>
<dbReference type="PANTHER" id="PTHR37297">
    <property type="entry name" value="PROTEIN NRDI"/>
    <property type="match status" value="1"/>
</dbReference>
<dbReference type="PANTHER" id="PTHR37297:SF1">
    <property type="entry name" value="PROTEIN NRDI"/>
    <property type="match status" value="1"/>
</dbReference>
<dbReference type="Pfam" id="PF07972">
    <property type="entry name" value="Flavodoxin_NdrI"/>
    <property type="match status" value="1"/>
</dbReference>
<dbReference type="PIRSF" id="PIRSF005087">
    <property type="entry name" value="NrdI"/>
    <property type="match status" value="1"/>
</dbReference>
<dbReference type="SUPFAM" id="SSF52218">
    <property type="entry name" value="Flavoproteins"/>
    <property type="match status" value="1"/>
</dbReference>
<proteinExistence type="inferred from homology"/>